<accession>Q8IYW4</accession>
<accession>B0QYD5</accession>
<accession>Q5H9F7</accession>
<accession>Q96LK3</accession>
<keyword id="KW-0175">Coiled coil</keyword>
<keyword id="KW-1267">Proteomics identification</keyword>
<keyword id="KW-1185">Reference proteome</keyword>
<sequence>MAFRRQVKNFVKNYSDAEIKVREATSNDPWGPSSSLMLDISDLTFNTISLSEIMNMLWHRLNDHGKNWRHVYKSLTLMDYLIKNGSKKVIQHCREGFCNLQTLKDFQHIDEAGKDQGYYIREKSKQVITLLMDEPLLCKEREVACRTRQRTSHSILFSKRQLGSSNSLTACTSAPTPDISASEKKYKLPKFGRLHNKRNVCKAGLKQEHCQDVHLPTETMLSQETLPLKIHGWKSTEDLMTFLDDDPELPLLATPPSIVSPITCLSEAEEVCNLSGADAVPTLSENSPSGQRDVSLDKRSDGIFTNTVTENLLETPLEKQSAAEGLKTLTILPACWSSKEEFISPDLRVSKSDSTFHNQASVETLCLSPSFKIFDRVKEIVINKAYQKPAQSSIQMDDKILKTTTRVSTASEGASSFSPLSMSSPDLASPEKSAHLLSPILAGPSFWTLSHQQLSSTSFKDEDKTAKLHHSFASRGPVSSDVEENDSLNLLGILPNNSDSAKKNISHISSSHWGEFSTQNVDQFIPLSCSGFQSTKDFPQEPEAKNSISVLLREVKRAIARLHEDLSTVIQELNVINNILMSMSLNSSQISQSSQVPQSSEGSSDQI</sequence>
<reference key="1">
    <citation type="journal article" date="2004" name="Genome Biol.">
        <title>A genome annotation-driven approach to cloning the human ORFeome.</title>
        <authorList>
            <person name="Collins J.E."/>
            <person name="Wright C.L."/>
            <person name="Edwards C.A."/>
            <person name="Davis M.P."/>
            <person name="Grinham J.A."/>
            <person name="Cole C.G."/>
            <person name="Goward M.E."/>
            <person name="Aguado B."/>
            <person name="Mallya M."/>
            <person name="Mokrab Y."/>
            <person name="Huckle E.J."/>
            <person name="Beare D.M."/>
            <person name="Dunham I."/>
        </authorList>
    </citation>
    <scope>NUCLEOTIDE SEQUENCE [LARGE SCALE MRNA]</scope>
</reference>
<reference key="2">
    <citation type="journal article" date="1999" name="Nature">
        <title>The DNA sequence of human chromosome 22.</title>
        <authorList>
            <person name="Dunham I."/>
            <person name="Hunt A.R."/>
            <person name="Collins J.E."/>
            <person name="Bruskiewich R."/>
            <person name="Beare D.M."/>
            <person name="Clamp M."/>
            <person name="Smink L.J."/>
            <person name="Ainscough R."/>
            <person name="Almeida J.P."/>
            <person name="Babbage A.K."/>
            <person name="Bagguley C."/>
            <person name="Bailey J."/>
            <person name="Barlow K.F."/>
            <person name="Bates K.N."/>
            <person name="Beasley O.P."/>
            <person name="Bird C.P."/>
            <person name="Blakey S.E."/>
            <person name="Bridgeman A.M."/>
            <person name="Buck D."/>
            <person name="Burgess J."/>
            <person name="Burrill W.D."/>
            <person name="Burton J."/>
            <person name="Carder C."/>
            <person name="Carter N.P."/>
            <person name="Chen Y."/>
            <person name="Clark G."/>
            <person name="Clegg S.M."/>
            <person name="Cobley V.E."/>
            <person name="Cole C.G."/>
            <person name="Collier R.E."/>
            <person name="Connor R."/>
            <person name="Conroy D."/>
            <person name="Corby N.R."/>
            <person name="Coville G.J."/>
            <person name="Cox A.V."/>
            <person name="Davis J."/>
            <person name="Dawson E."/>
            <person name="Dhami P.D."/>
            <person name="Dockree C."/>
            <person name="Dodsworth S.J."/>
            <person name="Durbin R.M."/>
            <person name="Ellington A.G."/>
            <person name="Evans K.L."/>
            <person name="Fey J.M."/>
            <person name="Fleming K."/>
            <person name="French L."/>
            <person name="Garner A.A."/>
            <person name="Gilbert J.G.R."/>
            <person name="Goward M.E."/>
            <person name="Grafham D.V."/>
            <person name="Griffiths M.N.D."/>
            <person name="Hall C."/>
            <person name="Hall R.E."/>
            <person name="Hall-Tamlyn G."/>
            <person name="Heathcott R.W."/>
            <person name="Ho S."/>
            <person name="Holmes S."/>
            <person name="Hunt S.E."/>
            <person name="Jones M.C."/>
            <person name="Kershaw J."/>
            <person name="Kimberley A.M."/>
            <person name="King A."/>
            <person name="Laird G.K."/>
            <person name="Langford C.F."/>
            <person name="Leversha M.A."/>
            <person name="Lloyd C."/>
            <person name="Lloyd D.M."/>
            <person name="Martyn I.D."/>
            <person name="Mashreghi-Mohammadi M."/>
            <person name="Matthews L.H."/>
            <person name="Mccann O.T."/>
            <person name="Mcclay J."/>
            <person name="Mclaren S."/>
            <person name="McMurray A.A."/>
            <person name="Milne S.A."/>
            <person name="Mortimore B.J."/>
            <person name="Odell C.N."/>
            <person name="Pavitt R."/>
            <person name="Pearce A.V."/>
            <person name="Pearson D."/>
            <person name="Phillimore B.J.C.T."/>
            <person name="Phillips S.H."/>
            <person name="Plumb R.W."/>
            <person name="Ramsay H."/>
            <person name="Ramsey Y."/>
            <person name="Rogers L."/>
            <person name="Ross M.T."/>
            <person name="Scott C.E."/>
            <person name="Sehra H.K."/>
            <person name="Skuce C.D."/>
            <person name="Smalley S."/>
            <person name="Smith M.L."/>
            <person name="Soderlund C."/>
            <person name="Spragon L."/>
            <person name="Steward C.A."/>
            <person name="Sulston J.E."/>
            <person name="Swann R.M."/>
            <person name="Vaudin M."/>
            <person name="Wall M."/>
            <person name="Wallis J.M."/>
            <person name="Whiteley M.N."/>
            <person name="Willey D.L."/>
            <person name="Williams L."/>
            <person name="Williams S.A."/>
            <person name="Williamson H."/>
            <person name="Wilmer T.E."/>
            <person name="Wilming L."/>
            <person name="Wright C.L."/>
            <person name="Hubbard T."/>
            <person name="Bentley D.R."/>
            <person name="Beck S."/>
            <person name="Rogers J."/>
            <person name="Shimizu N."/>
            <person name="Minoshima S."/>
            <person name="Kawasaki K."/>
            <person name="Sasaki T."/>
            <person name="Asakawa S."/>
            <person name="Kudoh J."/>
            <person name="Shintani A."/>
            <person name="Shibuya K."/>
            <person name="Yoshizaki Y."/>
            <person name="Aoki N."/>
            <person name="Mitsuyama S."/>
            <person name="Roe B.A."/>
            <person name="Chen F."/>
            <person name="Chu L."/>
            <person name="Crabtree J."/>
            <person name="Deschamps S."/>
            <person name="Do A."/>
            <person name="Do T."/>
            <person name="Dorman A."/>
            <person name="Fang F."/>
            <person name="Fu Y."/>
            <person name="Hu P."/>
            <person name="Hua A."/>
            <person name="Kenton S."/>
            <person name="Lai H."/>
            <person name="Lao H.I."/>
            <person name="Lewis J."/>
            <person name="Lewis S."/>
            <person name="Lin S.-P."/>
            <person name="Loh P."/>
            <person name="Malaj E."/>
            <person name="Nguyen T."/>
            <person name="Pan H."/>
            <person name="Phan S."/>
            <person name="Qi S."/>
            <person name="Qian Y."/>
            <person name="Ray L."/>
            <person name="Ren Q."/>
            <person name="Shaull S."/>
            <person name="Sloan D."/>
            <person name="Song L."/>
            <person name="Wang Q."/>
            <person name="Wang Y."/>
            <person name="Wang Z."/>
            <person name="White J."/>
            <person name="Willingham D."/>
            <person name="Wu H."/>
            <person name="Yao Z."/>
            <person name="Zhan M."/>
            <person name="Zhang G."/>
            <person name="Chissoe S."/>
            <person name="Murray J."/>
            <person name="Miller N."/>
            <person name="Minx P."/>
            <person name="Fulton R."/>
            <person name="Johnson D."/>
            <person name="Bemis G."/>
            <person name="Bentley D."/>
            <person name="Bradshaw H."/>
            <person name="Bourne S."/>
            <person name="Cordes M."/>
            <person name="Du Z."/>
            <person name="Fulton L."/>
            <person name="Goela D."/>
            <person name="Graves T."/>
            <person name="Hawkins J."/>
            <person name="Hinds K."/>
            <person name="Kemp K."/>
            <person name="Latreille P."/>
            <person name="Layman D."/>
            <person name="Ozersky P."/>
            <person name="Rohlfing T."/>
            <person name="Scheet P."/>
            <person name="Walker C."/>
            <person name="Wamsley A."/>
            <person name="Wohldmann P."/>
            <person name="Pepin K."/>
            <person name="Nelson J."/>
            <person name="Korf I."/>
            <person name="Bedell J.A."/>
            <person name="Hillier L.W."/>
            <person name="Mardis E."/>
            <person name="Waterston R."/>
            <person name="Wilson R."/>
            <person name="Emanuel B.S."/>
            <person name="Shaikh T."/>
            <person name="Kurahashi H."/>
            <person name="Saitta S."/>
            <person name="Budarf M.L."/>
            <person name="McDermid H.E."/>
            <person name="Johnson A."/>
            <person name="Wong A.C.C."/>
            <person name="Morrow B.E."/>
            <person name="Edelmann L."/>
            <person name="Kim U.J."/>
            <person name="Shizuya H."/>
            <person name="Simon M.I."/>
            <person name="Dumanski J.P."/>
            <person name="Peyrard M."/>
            <person name="Kedra D."/>
            <person name="Seroussi E."/>
            <person name="Fransson I."/>
            <person name="Tapia I."/>
            <person name="Bruder C.E."/>
            <person name="O'Brien K.P."/>
            <person name="Wilkinson P."/>
            <person name="Bodenteich A."/>
            <person name="Hartman K."/>
            <person name="Hu X."/>
            <person name="Khan A.S."/>
            <person name="Lane L."/>
            <person name="Tilahun Y."/>
            <person name="Wright H."/>
        </authorList>
    </citation>
    <scope>NUCLEOTIDE SEQUENCE [LARGE SCALE GENOMIC DNA]</scope>
</reference>
<reference key="3">
    <citation type="submission" date="2005-07" db="EMBL/GenBank/DDBJ databases">
        <authorList>
            <person name="Mural R.J."/>
            <person name="Istrail S."/>
            <person name="Sutton G.G."/>
            <person name="Florea L."/>
            <person name="Halpern A.L."/>
            <person name="Mobarry C.M."/>
            <person name="Lippert R."/>
            <person name="Walenz B."/>
            <person name="Shatkay H."/>
            <person name="Dew I."/>
            <person name="Miller J.R."/>
            <person name="Flanigan M.J."/>
            <person name="Edwards N.J."/>
            <person name="Bolanos R."/>
            <person name="Fasulo D."/>
            <person name="Halldorsson B.V."/>
            <person name="Hannenhalli S."/>
            <person name="Turner R."/>
            <person name="Yooseph S."/>
            <person name="Lu F."/>
            <person name="Nusskern D.R."/>
            <person name="Shue B.C."/>
            <person name="Zheng X.H."/>
            <person name="Zhong F."/>
            <person name="Delcher A.L."/>
            <person name="Huson D.H."/>
            <person name="Kravitz S.A."/>
            <person name="Mouchard L."/>
            <person name="Reinert K."/>
            <person name="Remington K.A."/>
            <person name="Clark A.G."/>
            <person name="Waterman M.S."/>
            <person name="Eichler E.E."/>
            <person name="Adams M.D."/>
            <person name="Hunkapiller M.W."/>
            <person name="Myers E.W."/>
            <person name="Venter J.C."/>
        </authorList>
    </citation>
    <scope>NUCLEOTIDE SEQUENCE [LARGE SCALE GENOMIC DNA]</scope>
</reference>
<reference key="4">
    <citation type="journal article" date="2004" name="Genome Res.">
        <title>The status, quality, and expansion of the NIH full-length cDNA project: the Mammalian Gene Collection (MGC).</title>
        <authorList>
            <consortium name="The MGC Project Team"/>
        </authorList>
    </citation>
    <scope>NUCLEOTIDE SEQUENCE [LARGE SCALE MRNA]</scope>
    <source>
        <tissue>Testis</tissue>
    </source>
</reference>
<reference key="5">
    <citation type="journal article" date="2004" name="Nat. Genet.">
        <title>Complete sequencing and characterization of 21,243 full-length human cDNAs.</title>
        <authorList>
            <person name="Ota T."/>
            <person name="Suzuki Y."/>
            <person name="Nishikawa T."/>
            <person name="Otsuki T."/>
            <person name="Sugiyama T."/>
            <person name="Irie R."/>
            <person name="Wakamatsu A."/>
            <person name="Hayashi K."/>
            <person name="Sato H."/>
            <person name="Nagai K."/>
            <person name="Kimura K."/>
            <person name="Makita H."/>
            <person name="Sekine M."/>
            <person name="Obayashi M."/>
            <person name="Nishi T."/>
            <person name="Shibahara T."/>
            <person name="Tanaka T."/>
            <person name="Ishii S."/>
            <person name="Yamamoto J."/>
            <person name="Saito K."/>
            <person name="Kawai Y."/>
            <person name="Isono Y."/>
            <person name="Nakamura Y."/>
            <person name="Nagahari K."/>
            <person name="Murakami K."/>
            <person name="Yasuda T."/>
            <person name="Iwayanagi T."/>
            <person name="Wagatsuma M."/>
            <person name="Shiratori A."/>
            <person name="Sudo H."/>
            <person name="Hosoiri T."/>
            <person name="Kaku Y."/>
            <person name="Kodaira H."/>
            <person name="Kondo H."/>
            <person name="Sugawara M."/>
            <person name="Takahashi M."/>
            <person name="Kanda K."/>
            <person name="Yokoi T."/>
            <person name="Furuya T."/>
            <person name="Kikkawa E."/>
            <person name="Omura Y."/>
            <person name="Abe K."/>
            <person name="Kamihara K."/>
            <person name="Katsuta N."/>
            <person name="Sato K."/>
            <person name="Tanikawa M."/>
            <person name="Yamazaki M."/>
            <person name="Ninomiya K."/>
            <person name="Ishibashi T."/>
            <person name="Yamashita H."/>
            <person name="Murakawa K."/>
            <person name="Fujimori K."/>
            <person name="Tanai H."/>
            <person name="Kimata M."/>
            <person name="Watanabe M."/>
            <person name="Hiraoka S."/>
            <person name="Chiba Y."/>
            <person name="Ishida S."/>
            <person name="Ono Y."/>
            <person name="Takiguchi S."/>
            <person name="Watanabe S."/>
            <person name="Yosida M."/>
            <person name="Hotuta T."/>
            <person name="Kusano J."/>
            <person name="Kanehori K."/>
            <person name="Takahashi-Fujii A."/>
            <person name="Hara H."/>
            <person name="Tanase T.-O."/>
            <person name="Nomura Y."/>
            <person name="Togiya S."/>
            <person name="Komai F."/>
            <person name="Hara R."/>
            <person name="Takeuchi K."/>
            <person name="Arita M."/>
            <person name="Imose N."/>
            <person name="Musashino K."/>
            <person name="Yuuki H."/>
            <person name="Oshima A."/>
            <person name="Sasaki N."/>
            <person name="Aotsuka S."/>
            <person name="Yoshikawa Y."/>
            <person name="Matsunawa H."/>
            <person name="Ichihara T."/>
            <person name="Shiohata N."/>
            <person name="Sano S."/>
            <person name="Moriya S."/>
            <person name="Momiyama H."/>
            <person name="Satoh N."/>
            <person name="Takami S."/>
            <person name="Terashima Y."/>
            <person name="Suzuki O."/>
            <person name="Nakagawa S."/>
            <person name="Senoh A."/>
            <person name="Mizoguchi H."/>
            <person name="Goto Y."/>
            <person name="Shimizu F."/>
            <person name="Wakebe H."/>
            <person name="Hishigaki H."/>
            <person name="Watanabe T."/>
            <person name="Sugiyama A."/>
            <person name="Takemoto M."/>
            <person name="Kawakami B."/>
            <person name="Yamazaki M."/>
            <person name="Watanabe K."/>
            <person name="Kumagai A."/>
            <person name="Itakura S."/>
            <person name="Fukuzumi Y."/>
            <person name="Fujimori Y."/>
            <person name="Komiyama M."/>
            <person name="Tashiro H."/>
            <person name="Tanigami A."/>
            <person name="Fujiwara T."/>
            <person name="Ono T."/>
            <person name="Yamada K."/>
            <person name="Fujii Y."/>
            <person name="Ozaki K."/>
            <person name="Hirao M."/>
            <person name="Ohmori Y."/>
            <person name="Kawabata A."/>
            <person name="Hikiji T."/>
            <person name="Kobatake N."/>
            <person name="Inagaki H."/>
            <person name="Ikema Y."/>
            <person name="Okamoto S."/>
            <person name="Okitani R."/>
            <person name="Kawakami T."/>
            <person name="Noguchi S."/>
            <person name="Itoh T."/>
            <person name="Shigeta K."/>
            <person name="Senba T."/>
            <person name="Matsumura K."/>
            <person name="Nakajima Y."/>
            <person name="Mizuno T."/>
            <person name="Morinaga M."/>
            <person name="Sasaki M."/>
            <person name="Togashi T."/>
            <person name="Oyama M."/>
            <person name="Hata H."/>
            <person name="Watanabe M."/>
            <person name="Komatsu T."/>
            <person name="Mizushima-Sugano J."/>
            <person name="Satoh T."/>
            <person name="Shirai Y."/>
            <person name="Takahashi Y."/>
            <person name="Nakagawa K."/>
            <person name="Okumura K."/>
            <person name="Nagase T."/>
            <person name="Nomura N."/>
            <person name="Kikuchi H."/>
            <person name="Masuho Y."/>
            <person name="Yamashita R."/>
            <person name="Nakai K."/>
            <person name="Yada T."/>
            <person name="Nakamura Y."/>
            <person name="Ohara O."/>
            <person name="Isogai T."/>
            <person name="Sugano S."/>
        </authorList>
    </citation>
    <scope>NUCLEOTIDE SEQUENCE [LARGE SCALE MRNA] OF 357-607</scope>
    <source>
        <tissue>Testis</tissue>
    </source>
</reference>
<comment type="interaction">
    <interactant intactId="EBI-20842218">
        <id>Q8IYW4</id>
    </interactant>
    <interactant intactId="EBI-296723">
        <id>O95295</id>
        <label>SNAPIN</label>
    </interactant>
    <organismsDiffer>false</organismsDiffer>
    <experiments>4</experiments>
</comment>
<comment type="sequence caution" evidence="3">
    <conflict type="erroneous initiation">
        <sequence resource="EMBL-CDS" id="BAB71688"/>
    </conflict>
</comment>
<organism>
    <name type="scientific">Homo sapiens</name>
    <name type="common">Human</name>
    <dbReference type="NCBI Taxonomy" id="9606"/>
    <lineage>
        <taxon>Eukaryota</taxon>
        <taxon>Metazoa</taxon>
        <taxon>Chordata</taxon>
        <taxon>Craniata</taxon>
        <taxon>Vertebrata</taxon>
        <taxon>Euteleostomi</taxon>
        <taxon>Mammalia</taxon>
        <taxon>Eutheria</taxon>
        <taxon>Euarchontoglires</taxon>
        <taxon>Primates</taxon>
        <taxon>Haplorrhini</taxon>
        <taxon>Catarrhini</taxon>
        <taxon>Hominidae</taxon>
        <taxon>Homo</taxon>
    </lineage>
</organism>
<name>ENTD1_HUMAN</name>
<feature type="chain" id="PRO_0000312179" description="ENTH domain-containing protein 1">
    <location>
        <begin position="1"/>
        <end position="607"/>
    </location>
</feature>
<feature type="domain" description="ENTH" evidence="2">
    <location>
        <begin position="9"/>
        <end position="141"/>
    </location>
</feature>
<feature type="coiled-coil region" evidence="1">
    <location>
        <begin position="543"/>
        <end position="574"/>
    </location>
</feature>
<feature type="sequence variant" id="VAR_037449" description="In dbSNP:rs17319801.">
    <original>I</original>
    <variation>T</variation>
    <location>
        <position position="109"/>
    </location>
</feature>
<gene>
    <name type="primary">ENTHD1</name>
</gene>
<evidence type="ECO:0000255" key="1"/>
<evidence type="ECO:0000255" key="2">
    <source>
        <dbReference type="PROSITE-ProRule" id="PRU00243"/>
    </source>
</evidence>
<evidence type="ECO:0000305" key="3"/>
<protein>
    <recommendedName>
        <fullName>ENTH domain-containing protein 1</fullName>
    </recommendedName>
    <alternativeName>
        <fullName>Epsin-2B</fullName>
    </alternativeName>
</protein>
<dbReference type="EMBL" id="CR456452">
    <property type="protein sequence ID" value="CAG30338.1"/>
    <property type="molecule type" value="mRNA"/>
</dbReference>
<dbReference type="EMBL" id="Z82206">
    <property type="status" value="NOT_ANNOTATED_CDS"/>
    <property type="molecule type" value="Genomic_DNA"/>
</dbReference>
<dbReference type="EMBL" id="AL022353">
    <property type="status" value="NOT_ANNOTATED_CDS"/>
    <property type="molecule type" value="Genomic_DNA"/>
</dbReference>
<dbReference type="EMBL" id="AL022319">
    <property type="status" value="NOT_ANNOTATED_CDS"/>
    <property type="molecule type" value="Genomic_DNA"/>
</dbReference>
<dbReference type="EMBL" id="CH471095">
    <property type="protein sequence ID" value="EAW60353.1"/>
    <property type="molecule type" value="Genomic_DNA"/>
</dbReference>
<dbReference type="EMBL" id="BC033895">
    <property type="protein sequence ID" value="AAH33895.1"/>
    <property type="molecule type" value="mRNA"/>
</dbReference>
<dbReference type="EMBL" id="AK058150">
    <property type="protein sequence ID" value="BAB71688.1"/>
    <property type="status" value="ALT_INIT"/>
    <property type="molecule type" value="mRNA"/>
</dbReference>
<dbReference type="CCDS" id="CCDS13998.1"/>
<dbReference type="RefSeq" id="NP_689725.2">
    <property type="nucleotide sequence ID" value="NM_152512.3"/>
</dbReference>
<dbReference type="RefSeq" id="XP_006724212.1">
    <property type="nucleotide sequence ID" value="XM_006724149.4"/>
</dbReference>
<dbReference type="RefSeq" id="XP_054181124.1">
    <property type="nucleotide sequence ID" value="XM_054325149.1"/>
</dbReference>
<dbReference type="SMR" id="Q8IYW4"/>
<dbReference type="BioGRID" id="127283">
    <property type="interactions" value="42"/>
</dbReference>
<dbReference type="FunCoup" id="Q8IYW4">
    <property type="interactions" value="7"/>
</dbReference>
<dbReference type="IntAct" id="Q8IYW4">
    <property type="interactions" value="22"/>
</dbReference>
<dbReference type="STRING" id="9606.ENSP00000317431"/>
<dbReference type="GlyGen" id="Q8IYW4">
    <property type="glycosylation" value="1 site"/>
</dbReference>
<dbReference type="iPTMnet" id="Q8IYW4"/>
<dbReference type="PhosphoSitePlus" id="Q8IYW4"/>
<dbReference type="BioMuta" id="ENTHD1"/>
<dbReference type="DMDM" id="74728393"/>
<dbReference type="jPOST" id="Q8IYW4"/>
<dbReference type="MassIVE" id="Q8IYW4"/>
<dbReference type="PaxDb" id="9606-ENSP00000317431"/>
<dbReference type="PeptideAtlas" id="Q8IYW4"/>
<dbReference type="ProteomicsDB" id="71252"/>
<dbReference type="Antibodypedia" id="12697">
    <property type="antibodies" value="80 antibodies from 16 providers"/>
</dbReference>
<dbReference type="DNASU" id="150350"/>
<dbReference type="Ensembl" id="ENST00000325157.7">
    <property type="protein sequence ID" value="ENSP00000317431.6"/>
    <property type="gene ID" value="ENSG00000176177.10"/>
</dbReference>
<dbReference type="GeneID" id="150350"/>
<dbReference type="KEGG" id="hsa:150350"/>
<dbReference type="MANE-Select" id="ENST00000325157.7">
    <property type="protein sequence ID" value="ENSP00000317431.6"/>
    <property type="RefSeq nucleotide sequence ID" value="NM_152512.4"/>
    <property type="RefSeq protein sequence ID" value="NP_689725.2"/>
</dbReference>
<dbReference type="UCSC" id="uc003ayg.3">
    <property type="organism name" value="human"/>
</dbReference>
<dbReference type="AGR" id="HGNC:26352"/>
<dbReference type="CTD" id="150350"/>
<dbReference type="GeneCards" id="ENTHD1"/>
<dbReference type="HGNC" id="HGNC:26352">
    <property type="gene designation" value="ENTHD1"/>
</dbReference>
<dbReference type="HPA" id="ENSG00000176177">
    <property type="expression patterns" value="Tissue enriched (testis)"/>
</dbReference>
<dbReference type="neXtProt" id="NX_Q8IYW4"/>
<dbReference type="OpenTargets" id="ENSG00000176177"/>
<dbReference type="PharmGKB" id="PA145148940"/>
<dbReference type="VEuPathDB" id="HostDB:ENSG00000176177"/>
<dbReference type="eggNOG" id="KOG2056">
    <property type="taxonomic scope" value="Eukaryota"/>
</dbReference>
<dbReference type="GeneTree" id="ENSGT00940000161730"/>
<dbReference type="HOGENOM" id="CLU_463044_0_0_1"/>
<dbReference type="InParanoid" id="Q8IYW4"/>
<dbReference type="OMA" id="IMNMLWH"/>
<dbReference type="OrthoDB" id="4033880at2759"/>
<dbReference type="PAN-GO" id="Q8IYW4">
    <property type="GO annotations" value="6 GO annotations based on evolutionary models"/>
</dbReference>
<dbReference type="PhylomeDB" id="Q8IYW4"/>
<dbReference type="TreeFam" id="TF313361"/>
<dbReference type="PathwayCommons" id="Q8IYW4"/>
<dbReference type="SignaLink" id="Q8IYW4"/>
<dbReference type="BioGRID-ORCS" id="150350">
    <property type="hits" value="9 hits in 1139 CRISPR screens"/>
</dbReference>
<dbReference type="ChiTaRS" id="ENTHD1">
    <property type="organism name" value="human"/>
</dbReference>
<dbReference type="GenomeRNAi" id="150350"/>
<dbReference type="Pharos" id="Q8IYW4">
    <property type="development level" value="Tdark"/>
</dbReference>
<dbReference type="PRO" id="PR:Q8IYW4"/>
<dbReference type="Proteomes" id="UP000005640">
    <property type="component" value="Chromosome 22"/>
</dbReference>
<dbReference type="RNAct" id="Q8IYW4">
    <property type="molecule type" value="protein"/>
</dbReference>
<dbReference type="Bgee" id="ENSG00000176177">
    <property type="expression patterns" value="Expressed in male germ line stem cell (sensu Vertebrata) in testis and 47 other cell types or tissues"/>
</dbReference>
<dbReference type="GO" id="GO:0030125">
    <property type="term" value="C:clathrin vesicle coat"/>
    <property type="evidence" value="ECO:0000318"/>
    <property type="project" value="GO_Central"/>
</dbReference>
<dbReference type="GO" id="GO:0005768">
    <property type="term" value="C:endosome"/>
    <property type="evidence" value="ECO:0000318"/>
    <property type="project" value="GO_Central"/>
</dbReference>
<dbReference type="GO" id="GO:0005886">
    <property type="term" value="C:plasma membrane"/>
    <property type="evidence" value="ECO:0000318"/>
    <property type="project" value="GO_Central"/>
</dbReference>
<dbReference type="GO" id="GO:0030276">
    <property type="term" value="F:clathrin binding"/>
    <property type="evidence" value="ECO:0000318"/>
    <property type="project" value="GO_Central"/>
</dbReference>
<dbReference type="GO" id="GO:0005543">
    <property type="term" value="F:phospholipid binding"/>
    <property type="evidence" value="ECO:0000318"/>
    <property type="project" value="GO_Central"/>
</dbReference>
<dbReference type="GO" id="GO:0006897">
    <property type="term" value="P:endocytosis"/>
    <property type="evidence" value="ECO:0000318"/>
    <property type="project" value="GO_Central"/>
</dbReference>
<dbReference type="CDD" id="cd16990">
    <property type="entry name" value="ENTH_Epsin"/>
    <property type="match status" value="1"/>
</dbReference>
<dbReference type="FunFam" id="1.25.40.90:FF:000006">
    <property type="entry name" value="Clathrin interactor 1"/>
    <property type="match status" value="1"/>
</dbReference>
<dbReference type="Gene3D" id="1.25.40.90">
    <property type="match status" value="1"/>
</dbReference>
<dbReference type="InterPro" id="IPR013809">
    <property type="entry name" value="ENTH"/>
</dbReference>
<dbReference type="InterPro" id="IPR008942">
    <property type="entry name" value="ENTH_VHS"/>
</dbReference>
<dbReference type="PANTHER" id="PTHR12276:SF57">
    <property type="entry name" value="ENTH DOMAIN-CONTAINING PROTEIN 1"/>
    <property type="match status" value="1"/>
</dbReference>
<dbReference type="PANTHER" id="PTHR12276">
    <property type="entry name" value="EPSIN/ENT-RELATED"/>
    <property type="match status" value="1"/>
</dbReference>
<dbReference type="Pfam" id="PF01417">
    <property type="entry name" value="ENTH"/>
    <property type="match status" value="1"/>
</dbReference>
<dbReference type="SMART" id="SM00273">
    <property type="entry name" value="ENTH"/>
    <property type="match status" value="1"/>
</dbReference>
<dbReference type="SUPFAM" id="SSF48464">
    <property type="entry name" value="ENTH/VHS domain"/>
    <property type="match status" value="1"/>
</dbReference>
<dbReference type="PROSITE" id="PS50942">
    <property type="entry name" value="ENTH"/>
    <property type="match status" value="1"/>
</dbReference>
<proteinExistence type="evidence at protein level"/>